<keyword id="KW-0687">Ribonucleoprotein</keyword>
<keyword id="KW-0689">Ribosomal protein</keyword>
<keyword id="KW-0694">RNA-binding</keyword>
<keyword id="KW-0699">rRNA-binding</keyword>
<comment type="function">
    <text evidence="1">One of the primary rRNA binding proteins, it binds directly to 16S rRNA where it helps nucleate assembly of the platform of the 30S subunit by binding and bridging several RNA helices of the 16S rRNA.</text>
</comment>
<comment type="function">
    <text evidence="1">Forms an intersubunit bridge (bridge B4) with the 23S rRNA of the 50S subunit in the ribosome.</text>
</comment>
<comment type="subunit">
    <text evidence="1">Part of the 30S ribosomal subunit. Forms a bridge to the 50S subunit in the 70S ribosome, contacting the 23S rRNA.</text>
</comment>
<comment type="similarity">
    <text evidence="1">Belongs to the universal ribosomal protein uS15 family.</text>
</comment>
<proteinExistence type="inferred from homology"/>
<accession>Q15V69</accession>
<gene>
    <name evidence="1" type="primary">rpsO</name>
    <name type="ordered locus">Patl_1698</name>
</gene>
<reference key="1">
    <citation type="submission" date="2006-06" db="EMBL/GenBank/DDBJ databases">
        <title>Complete sequence of Pseudoalteromonas atlantica T6c.</title>
        <authorList>
            <consortium name="US DOE Joint Genome Institute"/>
            <person name="Copeland A."/>
            <person name="Lucas S."/>
            <person name="Lapidus A."/>
            <person name="Barry K."/>
            <person name="Detter J.C."/>
            <person name="Glavina del Rio T."/>
            <person name="Hammon N."/>
            <person name="Israni S."/>
            <person name="Dalin E."/>
            <person name="Tice H."/>
            <person name="Pitluck S."/>
            <person name="Saunders E."/>
            <person name="Brettin T."/>
            <person name="Bruce D."/>
            <person name="Han C."/>
            <person name="Tapia R."/>
            <person name="Gilna P."/>
            <person name="Schmutz J."/>
            <person name="Larimer F."/>
            <person name="Land M."/>
            <person name="Hauser L."/>
            <person name="Kyrpides N."/>
            <person name="Kim E."/>
            <person name="Karls A.C."/>
            <person name="Bartlett D."/>
            <person name="Higgins B.P."/>
            <person name="Richardson P."/>
        </authorList>
    </citation>
    <scope>NUCLEOTIDE SEQUENCE [LARGE SCALE GENOMIC DNA]</scope>
    <source>
        <strain>T6c / ATCC BAA-1087</strain>
    </source>
</reference>
<feature type="chain" id="PRO_1000054843" description="Small ribosomal subunit protein uS15">
    <location>
        <begin position="1"/>
        <end position="89"/>
    </location>
</feature>
<organism>
    <name type="scientific">Pseudoalteromonas atlantica (strain T6c / ATCC BAA-1087)</name>
    <dbReference type="NCBI Taxonomy" id="3042615"/>
    <lineage>
        <taxon>Bacteria</taxon>
        <taxon>Pseudomonadati</taxon>
        <taxon>Pseudomonadota</taxon>
        <taxon>Gammaproteobacteria</taxon>
        <taxon>Alteromonadales</taxon>
        <taxon>Alteromonadaceae</taxon>
        <taxon>Paraglaciecola</taxon>
    </lineage>
</organism>
<evidence type="ECO:0000255" key="1">
    <source>
        <dbReference type="HAMAP-Rule" id="MF_01343"/>
    </source>
</evidence>
<evidence type="ECO:0000305" key="2"/>
<protein>
    <recommendedName>
        <fullName evidence="1">Small ribosomal subunit protein uS15</fullName>
    </recommendedName>
    <alternativeName>
        <fullName evidence="2">30S ribosomal protein S15</fullName>
    </alternativeName>
</protein>
<sequence>MSLTTQETAAIIADYGVKEGDTGSPEVQVALLTSNINKLQGHFADHKKDHHSRRGLLRMVSQRRKLLDYLKGKNVERYQDLIKRLGLRR</sequence>
<dbReference type="EMBL" id="CP000388">
    <property type="protein sequence ID" value="ABG40219.1"/>
    <property type="molecule type" value="Genomic_DNA"/>
</dbReference>
<dbReference type="RefSeq" id="WP_006994175.1">
    <property type="nucleotide sequence ID" value="NC_008228.1"/>
</dbReference>
<dbReference type="SMR" id="Q15V69"/>
<dbReference type="STRING" id="342610.Patl_1698"/>
<dbReference type="KEGG" id="pat:Patl_1698"/>
<dbReference type="eggNOG" id="COG0184">
    <property type="taxonomic scope" value="Bacteria"/>
</dbReference>
<dbReference type="HOGENOM" id="CLU_148518_0_0_6"/>
<dbReference type="OrthoDB" id="9799262at2"/>
<dbReference type="Proteomes" id="UP000001981">
    <property type="component" value="Chromosome"/>
</dbReference>
<dbReference type="GO" id="GO:0022627">
    <property type="term" value="C:cytosolic small ribosomal subunit"/>
    <property type="evidence" value="ECO:0007669"/>
    <property type="project" value="TreeGrafter"/>
</dbReference>
<dbReference type="GO" id="GO:0019843">
    <property type="term" value="F:rRNA binding"/>
    <property type="evidence" value="ECO:0007669"/>
    <property type="project" value="UniProtKB-UniRule"/>
</dbReference>
<dbReference type="GO" id="GO:0003735">
    <property type="term" value="F:structural constituent of ribosome"/>
    <property type="evidence" value="ECO:0007669"/>
    <property type="project" value="InterPro"/>
</dbReference>
<dbReference type="GO" id="GO:0006412">
    <property type="term" value="P:translation"/>
    <property type="evidence" value="ECO:0007669"/>
    <property type="project" value="UniProtKB-UniRule"/>
</dbReference>
<dbReference type="CDD" id="cd00353">
    <property type="entry name" value="Ribosomal_S15p_S13e"/>
    <property type="match status" value="1"/>
</dbReference>
<dbReference type="FunFam" id="1.10.287.10:FF:000002">
    <property type="entry name" value="30S ribosomal protein S15"/>
    <property type="match status" value="1"/>
</dbReference>
<dbReference type="Gene3D" id="6.10.250.3130">
    <property type="match status" value="1"/>
</dbReference>
<dbReference type="Gene3D" id="1.10.287.10">
    <property type="entry name" value="S15/NS1, RNA-binding"/>
    <property type="match status" value="1"/>
</dbReference>
<dbReference type="HAMAP" id="MF_01343_B">
    <property type="entry name" value="Ribosomal_uS15_B"/>
    <property type="match status" value="1"/>
</dbReference>
<dbReference type="InterPro" id="IPR000589">
    <property type="entry name" value="Ribosomal_uS15"/>
</dbReference>
<dbReference type="InterPro" id="IPR005290">
    <property type="entry name" value="Ribosomal_uS15_bac-type"/>
</dbReference>
<dbReference type="InterPro" id="IPR009068">
    <property type="entry name" value="uS15_NS1_RNA-bd_sf"/>
</dbReference>
<dbReference type="NCBIfam" id="TIGR00952">
    <property type="entry name" value="S15_bact"/>
    <property type="match status" value="1"/>
</dbReference>
<dbReference type="PANTHER" id="PTHR23321">
    <property type="entry name" value="RIBOSOMAL PROTEIN S15, BACTERIAL AND ORGANELLAR"/>
    <property type="match status" value="1"/>
</dbReference>
<dbReference type="PANTHER" id="PTHR23321:SF26">
    <property type="entry name" value="SMALL RIBOSOMAL SUBUNIT PROTEIN US15M"/>
    <property type="match status" value="1"/>
</dbReference>
<dbReference type="Pfam" id="PF00312">
    <property type="entry name" value="Ribosomal_S15"/>
    <property type="match status" value="1"/>
</dbReference>
<dbReference type="SMART" id="SM01387">
    <property type="entry name" value="Ribosomal_S15"/>
    <property type="match status" value="1"/>
</dbReference>
<dbReference type="SUPFAM" id="SSF47060">
    <property type="entry name" value="S15/NS1 RNA-binding domain"/>
    <property type="match status" value="1"/>
</dbReference>
<dbReference type="PROSITE" id="PS00362">
    <property type="entry name" value="RIBOSOMAL_S15"/>
    <property type="match status" value="1"/>
</dbReference>
<name>RS15_PSEA6</name>